<comment type="function">
    <text evidence="1">Component of the ERMES/MDM complex, which serves as a molecular tether to connect the endoplasmic reticulum (ER) and mitochondria. Components of this complex are involved in the control of mitochondrial shape and protein biogenesis, and function in nonvesicular lipid trafficking between the ER and mitochondria. MDM34 is required for the interaction of the ER-resident membrane protein MMM1 and the outer mitochondrial membrane-resident beta-barrel protein MDM10.</text>
</comment>
<comment type="subunit">
    <text evidence="1">Component of the ER-mitochondria encounter structure (ERMES) or MDM complex, composed of MMM1, MDM10, MDM12 and MDM34.</text>
</comment>
<comment type="subcellular location">
    <subcellularLocation>
        <location evidence="1">Mitochondrion outer membrane</location>
        <topology evidence="1">Multi-pass membrane protein</topology>
    </subcellularLocation>
    <text evidence="1">The ERMES/MDM complex localizes to a few discrete foci (around 10 per single cell), that represent mitochondria-endoplasmic reticulum junctions. These foci are often found next to mtDNA nucleoids.</text>
</comment>
<comment type="domain">
    <text evidence="1">Lacks alpha-helical transmembrane segments, suggesting that it resides in the membrane via beta-sheet conformations similar to those predicted for other outer membrane proteins and porin.</text>
</comment>
<comment type="domain">
    <text evidence="1">The SMP-LTD domain is a barrel-like domain that can bind various types of glycerophospholipids in its interior and mediate their transfer between two adjacent bilayers.</text>
</comment>
<comment type="PTM">
    <text evidence="1">Ubiquitinated by a SCF (SKP1-CUL1-F-box protein) E3 ubiquitin-protein ligase complex containing the F-box protein MDM30. Ubiquitination is important for mitochondrial integrity.</text>
</comment>
<comment type="similarity">
    <text evidence="1">Belongs to the MDM34 family.</text>
</comment>
<reference key="1">
    <citation type="journal article" date="2007" name="Proc. Natl. Acad. Sci. U.S.A.">
        <title>Genome sequencing and comparative analysis of Saccharomyces cerevisiae strain YJM789.</title>
        <authorList>
            <person name="Wei W."/>
            <person name="McCusker J.H."/>
            <person name="Hyman R.W."/>
            <person name="Jones T."/>
            <person name="Ning Y."/>
            <person name="Cao Z."/>
            <person name="Gu Z."/>
            <person name="Bruno D."/>
            <person name="Miranda M."/>
            <person name="Nguyen M."/>
            <person name="Wilhelmy J."/>
            <person name="Komp C."/>
            <person name="Tamse R."/>
            <person name="Wang X."/>
            <person name="Jia P."/>
            <person name="Luedi P."/>
            <person name="Oefner P.J."/>
            <person name="David L."/>
            <person name="Dietrich F.S."/>
            <person name="Li Y."/>
            <person name="Davis R.W."/>
            <person name="Steinmetz L.M."/>
        </authorList>
    </citation>
    <scope>NUCLEOTIDE SEQUENCE [LARGE SCALE GENOMIC DNA]</scope>
    <source>
        <strain>YJM789</strain>
    </source>
</reference>
<accession>A6ZTX2</accession>
<sequence>MSFRFNEAVFGDNSFNERIREKLSTALNSPSKKKLDILKSGIKVQKVDFPTIPQLEILDLDIITQPKSLAKGICKISCKDAMLRIQTVIESNLLLINEQDTPSFTMPQLINNGSFTIPITMTFSSIELEAITNIFVKNPGIGISFNDVDLDFKFDCSVKILQSTIERRLKESMHVVFKDVLPSLIFNTSQNWFTNRGESTSTIPGKREHHHQQTTMSRNVILDGSDFQELSPINMLRLSSIVSSRSTLSLHSTVMNSLSAIPGCLERQNLYRFISRMPSLNNYYSSQSFPQPKSSTVSSKQLVKPFYCSHNLLPKTVLDSSQYDLATITKIQSRLFDRSNSNDDNAKPRRRKIKCKKTRTPSNLQSQGEQAVDDSTAIETVTSTPVQTPIPELEEQSPPYLKTTVSIRDKYVIPEKISLNLDSKKDTSKKKPFYFIGLNSQEPSNNWKWGMEDSPPPYH</sequence>
<keyword id="KW-0445">Lipid transport</keyword>
<keyword id="KW-0446">Lipid-binding</keyword>
<keyword id="KW-0472">Membrane</keyword>
<keyword id="KW-0496">Mitochondrion</keyword>
<keyword id="KW-1000">Mitochondrion outer membrane</keyword>
<keyword id="KW-0812">Transmembrane</keyword>
<keyword id="KW-1134">Transmembrane beta strand</keyword>
<keyword id="KW-0813">Transport</keyword>
<keyword id="KW-0832">Ubl conjugation</keyword>
<evidence type="ECO:0000255" key="1">
    <source>
        <dbReference type="HAMAP-Rule" id="MF_03105"/>
    </source>
</evidence>
<evidence type="ECO:0000256" key="2">
    <source>
        <dbReference type="SAM" id="MobiDB-lite"/>
    </source>
</evidence>
<name>MDM34_YEAS7</name>
<dbReference type="EMBL" id="AAFW02000099">
    <property type="protein sequence ID" value="EDN61910.1"/>
    <property type="molecule type" value="Genomic_DNA"/>
</dbReference>
<dbReference type="HOGENOM" id="CLU_036329_0_0_1"/>
<dbReference type="Proteomes" id="UP000007060">
    <property type="component" value="Unassembled WGS sequence"/>
</dbReference>
<dbReference type="GO" id="GO:0032865">
    <property type="term" value="C:ERMES complex"/>
    <property type="evidence" value="ECO:0007669"/>
    <property type="project" value="UniProtKB-UniRule"/>
</dbReference>
<dbReference type="GO" id="GO:0008289">
    <property type="term" value="F:lipid binding"/>
    <property type="evidence" value="ECO:0007669"/>
    <property type="project" value="UniProtKB-KW"/>
</dbReference>
<dbReference type="GO" id="GO:0000002">
    <property type="term" value="P:mitochondrial genome maintenance"/>
    <property type="evidence" value="ECO:0007669"/>
    <property type="project" value="UniProtKB-UniRule"/>
</dbReference>
<dbReference type="GO" id="GO:1990456">
    <property type="term" value="P:mitochondrion-endoplasmic reticulum membrane tethering"/>
    <property type="evidence" value="ECO:0007669"/>
    <property type="project" value="TreeGrafter"/>
</dbReference>
<dbReference type="GO" id="GO:0015914">
    <property type="term" value="P:phospholipid transport"/>
    <property type="evidence" value="ECO:0007669"/>
    <property type="project" value="TreeGrafter"/>
</dbReference>
<dbReference type="CDD" id="cd21673">
    <property type="entry name" value="SMP_Mdm34"/>
    <property type="match status" value="1"/>
</dbReference>
<dbReference type="HAMAP" id="MF_03105">
    <property type="entry name" value="Mdm34"/>
    <property type="match status" value="1"/>
</dbReference>
<dbReference type="InterPro" id="IPR027536">
    <property type="entry name" value="Mdm34"/>
</dbReference>
<dbReference type="InterPro" id="IPR031468">
    <property type="entry name" value="SMP_LBD"/>
</dbReference>
<dbReference type="PANTHER" id="PTHR28185">
    <property type="entry name" value="MITOCHONDRIAL DISTRIBUTION AND MORPHOLOGY PROTEIN 34"/>
    <property type="match status" value="1"/>
</dbReference>
<dbReference type="PANTHER" id="PTHR28185:SF1">
    <property type="entry name" value="MITOCHONDRIAL DISTRIBUTION AND MORPHOLOGY PROTEIN 34"/>
    <property type="match status" value="1"/>
</dbReference>
<dbReference type="PROSITE" id="PS51847">
    <property type="entry name" value="SMP"/>
    <property type="match status" value="1"/>
</dbReference>
<gene>
    <name evidence="1" type="primary">MDM34</name>
    <name evidence="1" type="synonym">MMM2</name>
    <name type="ORF">SCY_1855</name>
</gene>
<organism>
    <name type="scientific">Saccharomyces cerevisiae (strain YJM789)</name>
    <name type="common">Baker's yeast</name>
    <dbReference type="NCBI Taxonomy" id="307796"/>
    <lineage>
        <taxon>Eukaryota</taxon>
        <taxon>Fungi</taxon>
        <taxon>Dikarya</taxon>
        <taxon>Ascomycota</taxon>
        <taxon>Saccharomycotina</taxon>
        <taxon>Saccharomycetes</taxon>
        <taxon>Saccharomycetales</taxon>
        <taxon>Saccharomycetaceae</taxon>
        <taxon>Saccharomyces</taxon>
    </lineage>
</organism>
<proteinExistence type="inferred from homology"/>
<protein>
    <recommendedName>
        <fullName evidence="1">Mitochondrial distribution and morphology protein 34</fullName>
    </recommendedName>
    <alternativeName>
        <fullName evidence="1">Mitochondrial outer membrane protein MMM2</fullName>
    </alternativeName>
</protein>
<feature type="chain" id="PRO_0000384363" description="Mitochondrial distribution and morphology protein 34">
    <location>
        <begin position="1"/>
        <end position="459"/>
    </location>
</feature>
<feature type="domain" description="SMP-LTD" evidence="1">
    <location>
        <begin position="1"/>
        <end position="190"/>
    </location>
</feature>
<feature type="region of interest" description="Disordered" evidence="2">
    <location>
        <begin position="338"/>
        <end position="375"/>
    </location>
</feature>
<feature type="compositionally biased region" description="Basic and acidic residues" evidence="2">
    <location>
        <begin position="338"/>
        <end position="347"/>
    </location>
</feature>
<feature type="compositionally biased region" description="Basic residues" evidence="2">
    <location>
        <begin position="348"/>
        <end position="359"/>
    </location>
</feature>